<proteinExistence type="evidence at protein level"/>
<gene>
    <name evidence="7" type="primary">SHM2</name>
    <name evidence="9" type="synonym">SHMT2</name>
    <name evidence="11" type="ordered locus">At5g26780</name>
    <name type="ORF">F2P16.40</name>
</gene>
<reference key="1">
    <citation type="journal article" date="2000" name="Nature">
        <title>Sequence and analysis of chromosome 5 of the plant Arabidopsis thaliana.</title>
        <authorList>
            <person name="Tabata S."/>
            <person name="Kaneko T."/>
            <person name="Nakamura Y."/>
            <person name="Kotani H."/>
            <person name="Kato T."/>
            <person name="Asamizu E."/>
            <person name="Miyajima N."/>
            <person name="Sasamoto S."/>
            <person name="Kimura T."/>
            <person name="Hosouchi T."/>
            <person name="Kawashima K."/>
            <person name="Kohara M."/>
            <person name="Matsumoto M."/>
            <person name="Matsuno A."/>
            <person name="Muraki A."/>
            <person name="Nakayama S."/>
            <person name="Nakazaki N."/>
            <person name="Naruo K."/>
            <person name="Okumura S."/>
            <person name="Shinpo S."/>
            <person name="Takeuchi C."/>
            <person name="Wada T."/>
            <person name="Watanabe A."/>
            <person name="Yamada M."/>
            <person name="Yasuda M."/>
            <person name="Sato S."/>
            <person name="de la Bastide M."/>
            <person name="Huang E."/>
            <person name="Spiegel L."/>
            <person name="Gnoj L."/>
            <person name="O'Shaughnessy A."/>
            <person name="Preston R."/>
            <person name="Habermann K."/>
            <person name="Murray J."/>
            <person name="Johnson D."/>
            <person name="Rohlfing T."/>
            <person name="Nelson J."/>
            <person name="Stoneking T."/>
            <person name="Pepin K."/>
            <person name="Spieth J."/>
            <person name="Sekhon M."/>
            <person name="Armstrong J."/>
            <person name="Becker M."/>
            <person name="Belter E."/>
            <person name="Cordum H."/>
            <person name="Cordes M."/>
            <person name="Courtney L."/>
            <person name="Courtney W."/>
            <person name="Dante M."/>
            <person name="Du H."/>
            <person name="Edwards J."/>
            <person name="Fryman J."/>
            <person name="Haakensen B."/>
            <person name="Lamar E."/>
            <person name="Latreille P."/>
            <person name="Leonard S."/>
            <person name="Meyer R."/>
            <person name="Mulvaney E."/>
            <person name="Ozersky P."/>
            <person name="Riley A."/>
            <person name="Strowmatt C."/>
            <person name="Wagner-McPherson C."/>
            <person name="Wollam A."/>
            <person name="Yoakum M."/>
            <person name="Bell M."/>
            <person name="Dedhia N."/>
            <person name="Parnell L."/>
            <person name="Shah R."/>
            <person name="Rodriguez M."/>
            <person name="Hoon See L."/>
            <person name="Vil D."/>
            <person name="Baker J."/>
            <person name="Kirchoff K."/>
            <person name="Toth K."/>
            <person name="King L."/>
            <person name="Bahret A."/>
            <person name="Miller B."/>
            <person name="Marra M.A."/>
            <person name="Martienssen R."/>
            <person name="McCombie W.R."/>
            <person name="Wilson R.K."/>
            <person name="Murphy G."/>
            <person name="Bancroft I."/>
            <person name="Volckaert G."/>
            <person name="Wambutt R."/>
            <person name="Duesterhoeft A."/>
            <person name="Stiekema W."/>
            <person name="Pohl T."/>
            <person name="Entian K.-D."/>
            <person name="Terryn N."/>
            <person name="Hartley N."/>
            <person name="Bent E."/>
            <person name="Johnson S."/>
            <person name="Langham S.-A."/>
            <person name="McCullagh B."/>
            <person name="Robben J."/>
            <person name="Grymonprez B."/>
            <person name="Zimmermann W."/>
            <person name="Ramsperger U."/>
            <person name="Wedler H."/>
            <person name="Balke K."/>
            <person name="Wedler E."/>
            <person name="Peters S."/>
            <person name="van Staveren M."/>
            <person name="Dirkse W."/>
            <person name="Mooijman P."/>
            <person name="Klein Lankhorst R."/>
            <person name="Weitzenegger T."/>
            <person name="Bothe G."/>
            <person name="Rose M."/>
            <person name="Hauf J."/>
            <person name="Berneiser S."/>
            <person name="Hempel S."/>
            <person name="Feldpausch M."/>
            <person name="Lamberth S."/>
            <person name="Villarroel R."/>
            <person name="Gielen J."/>
            <person name="Ardiles W."/>
            <person name="Bents O."/>
            <person name="Lemcke K."/>
            <person name="Kolesov G."/>
            <person name="Mayer K.F.X."/>
            <person name="Rudd S."/>
            <person name="Schoof H."/>
            <person name="Schueller C."/>
            <person name="Zaccaria P."/>
            <person name="Mewes H.-W."/>
            <person name="Bevan M."/>
            <person name="Fransz P.F."/>
        </authorList>
    </citation>
    <scope>NUCLEOTIDE SEQUENCE [LARGE SCALE GENOMIC DNA]</scope>
    <source>
        <strain>cv. Columbia</strain>
    </source>
</reference>
<reference key="2">
    <citation type="journal article" date="2017" name="Plant J.">
        <title>Araport11: a complete reannotation of the Arabidopsis thaliana reference genome.</title>
        <authorList>
            <person name="Cheng C.Y."/>
            <person name="Krishnakumar V."/>
            <person name="Chan A.P."/>
            <person name="Thibaud-Nissen F."/>
            <person name="Schobel S."/>
            <person name="Town C.D."/>
        </authorList>
    </citation>
    <scope>GENOME REANNOTATION</scope>
    <source>
        <strain>cv. Columbia</strain>
    </source>
</reference>
<reference key="3">
    <citation type="journal article" date="2003" name="Science">
        <title>Empirical analysis of transcriptional activity in the Arabidopsis genome.</title>
        <authorList>
            <person name="Yamada K."/>
            <person name="Lim J."/>
            <person name="Dale J.M."/>
            <person name="Chen H."/>
            <person name="Shinn P."/>
            <person name="Palm C.J."/>
            <person name="Southwick A.M."/>
            <person name="Wu H.C."/>
            <person name="Kim C.J."/>
            <person name="Nguyen M."/>
            <person name="Pham P.K."/>
            <person name="Cheuk R.F."/>
            <person name="Karlin-Newmann G."/>
            <person name="Liu S.X."/>
            <person name="Lam B."/>
            <person name="Sakano H."/>
            <person name="Wu T."/>
            <person name="Yu G."/>
            <person name="Miranda M."/>
            <person name="Quach H.L."/>
            <person name="Tripp M."/>
            <person name="Chang C.H."/>
            <person name="Lee J.M."/>
            <person name="Toriumi M.J."/>
            <person name="Chan M.M."/>
            <person name="Tang C.C."/>
            <person name="Onodera C.S."/>
            <person name="Deng J.M."/>
            <person name="Akiyama K."/>
            <person name="Ansari Y."/>
            <person name="Arakawa T."/>
            <person name="Banh J."/>
            <person name="Banno F."/>
            <person name="Bowser L."/>
            <person name="Brooks S.Y."/>
            <person name="Carninci P."/>
            <person name="Chao Q."/>
            <person name="Choy N."/>
            <person name="Enju A."/>
            <person name="Goldsmith A.D."/>
            <person name="Gurjal M."/>
            <person name="Hansen N.F."/>
            <person name="Hayashizaki Y."/>
            <person name="Johnson-Hopson C."/>
            <person name="Hsuan V.W."/>
            <person name="Iida K."/>
            <person name="Karnes M."/>
            <person name="Khan S."/>
            <person name="Koesema E."/>
            <person name="Ishida J."/>
            <person name="Jiang P.X."/>
            <person name="Jones T."/>
            <person name="Kawai J."/>
            <person name="Kamiya A."/>
            <person name="Meyers C."/>
            <person name="Nakajima M."/>
            <person name="Narusaka M."/>
            <person name="Seki M."/>
            <person name="Sakurai T."/>
            <person name="Satou M."/>
            <person name="Tamse R."/>
            <person name="Vaysberg M."/>
            <person name="Wallender E.K."/>
            <person name="Wong C."/>
            <person name="Yamamura Y."/>
            <person name="Yuan S."/>
            <person name="Shinozaki K."/>
            <person name="Davis R.W."/>
            <person name="Theologis A."/>
            <person name="Ecker J.R."/>
        </authorList>
    </citation>
    <scope>NUCLEOTIDE SEQUENCE [LARGE SCALE MRNA] (ISOFORMS 1 AND 2)</scope>
    <source>
        <strain>cv. Columbia</strain>
    </source>
</reference>
<reference key="4">
    <citation type="journal article" date="2009" name="DNA Res.">
        <title>Analysis of multiple occurrences of alternative splicing events in Arabidopsis thaliana using novel sequenced full-length cDNAs.</title>
        <authorList>
            <person name="Iida K."/>
            <person name="Fukami-Kobayashi K."/>
            <person name="Toyoda A."/>
            <person name="Sakaki Y."/>
            <person name="Kobayashi M."/>
            <person name="Seki M."/>
            <person name="Shinozaki K."/>
        </authorList>
    </citation>
    <scope>NUCLEOTIDE SEQUENCE [LARGE SCALE MRNA] (ISOFORM 1)</scope>
    <source>
        <strain>cv. Columbia</strain>
    </source>
</reference>
<reference key="5">
    <citation type="journal article" date="2000" name="Plant Physiol.">
        <title>Integrated temporal regulation of the photorespiratory pathway. Circadian regulation of two Arabidopsis genes encoding serine hydroxymethyltransferase.</title>
        <authorList>
            <person name="McClung C.R."/>
            <person name="Hsu M."/>
            <person name="Painter J.E."/>
            <person name="Gagne J.M."/>
            <person name="Karlsberg S.D."/>
            <person name="Salome P.A."/>
        </authorList>
    </citation>
    <scope>GENE FAMILY</scope>
    <scope>NOMENCLATURE</scope>
</reference>
<reference key="6">
    <citation type="journal article" date="2003" name="J. Exp. Bot.">
        <title>Genetic manipulation of glycine decarboxylation.</title>
        <authorList>
            <person name="Bauwe H."/>
            <person name="Kolukisaoglu U."/>
        </authorList>
    </citation>
    <scope>REVIEW</scope>
</reference>
<reference key="7">
    <citation type="journal article" date="2004" name="Plant Cell">
        <title>Experimental analysis of the Arabidopsis mitochondrial proteome highlights signaling and regulatory components, provides assessment of targeting prediction programs, and indicates plant-specific mitochondrial proteins.</title>
        <authorList>
            <person name="Heazlewood J.L."/>
            <person name="Tonti-Filippini J.S."/>
            <person name="Gout A.M."/>
            <person name="Day D.A."/>
            <person name="Whelan J."/>
            <person name="Millar A.H."/>
        </authorList>
    </citation>
    <scope>IDENTIFICATION BY MASS SPECTROMETRY</scope>
    <scope>SUBCELLULAR LOCATION [LARGE SCALE ANALYSIS]</scope>
    <source>
        <strain>cv. Landsberg erecta</strain>
    </source>
</reference>
<reference key="8">
    <citation type="journal article" date="2006" name="Plant Physiol.">
        <title>The photorespiratory Arabidopsis shm1 mutant is deficient in SHM1.</title>
        <authorList>
            <person name="Voll L.M."/>
            <person name="Jamai A."/>
            <person name="Renne P."/>
            <person name="Voll H."/>
            <person name="McClung C.R."/>
            <person name="Weber A.P."/>
        </authorList>
    </citation>
    <scope>TISSUE SPECIFICITY</scope>
    <scope>FUNCTION</scope>
    <scope>DISRUPTION PHENOTYPE</scope>
</reference>
<reference key="9">
    <citation type="journal article" date="2007" name="Mol. Cell. Proteomics">
        <title>Multidimensional protein identification technology (MudPIT) analysis of ubiquitinated proteins in plants.</title>
        <authorList>
            <person name="Maor R."/>
            <person name="Jones A."/>
            <person name="Nuehse T.S."/>
            <person name="Studholme D.J."/>
            <person name="Peck S.C."/>
            <person name="Shirasu K."/>
        </authorList>
    </citation>
    <scope>IDENTIFICATION BY MASS SPECTROMETRY [LARGE SCALE ANALYSIS]</scope>
    <source>
        <strain>cv. Landsberg erecta</strain>
    </source>
</reference>
<reference key="10">
    <citation type="journal article" date="2010" name="Biochem. J.">
        <title>One-carbon metabolism in plants: characterization of a plastid serine hydroxymethyltransferase.</title>
        <authorList>
            <person name="Zhang Y."/>
            <person name="Sun K."/>
            <person name="Sandoval F.J."/>
            <person name="Santiago K."/>
            <person name="Roje S."/>
        </authorList>
    </citation>
    <scope>GENE FAMILY</scope>
</reference>
<reference key="11">
    <citation type="journal article" date="2011" name="Plant Physiol.">
        <title>The presequence of Arabidopsis serine hydroxymethyltransferase SHM2 selectively prevents import into mesophyll mitochondria.</title>
        <authorList>
            <person name="Engel N."/>
            <person name="Ewald R."/>
            <person name="Gupta K.J."/>
            <person name="Zrenner R."/>
            <person name="Hagemann M."/>
            <person name="Bauwe H."/>
        </authorList>
    </citation>
    <scope>TISSUE SPECIFICITY</scope>
    <scope>FUNCTION</scope>
</reference>
<reference key="12">
    <citation type="journal article" date="2019" name="Sci. Rep.">
        <title>Structural basis of methotrexate and pemetrexed action on serine hydroxymethyltransferases revealed using plant models.</title>
        <authorList>
            <person name="Ruszkowski M."/>
            <person name="Sekula B."/>
            <person name="Ruszkowska A."/>
            <person name="Contestabile R."/>
            <person name="Nogues I."/>
            <person name="Angelaccio S."/>
            <person name="Szczepaniak A."/>
            <person name="Dauter Z."/>
        </authorList>
    </citation>
    <scope>X-RAY CRYSTALLOGRAPHY (1.54 ANGSTROMS) OF 54-517 IN COMPLEX WITH SERINE AND THE ANTIFOLATES METHOTREXATE AND PEMETREXED</scope>
    <scope>FUNCTION</scope>
    <scope>CATALYTIC ACTIVITY</scope>
    <scope>COFACTOR</scope>
    <scope>ACTIVITY REGULATION</scope>
    <scope>BIOPHYSICOCHEMICAL PROPERTIES</scope>
    <scope>SUBUNIT</scope>
</reference>
<organism>
    <name type="scientific">Arabidopsis thaliana</name>
    <name type="common">Mouse-ear cress</name>
    <dbReference type="NCBI Taxonomy" id="3702"/>
    <lineage>
        <taxon>Eukaryota</taxon>
        <taxon>Viridiplantae</taxon>
        <taxon>Streptophyta</taxon>
        <taxon>Embryophyta</taxon>
        <taxon>Tracheophyta</taxon>
        <taxon>Spermatophyta</taxon>
        <taxon>Magnoliopsida</taxon>
        <taxon>eudicotyledons</taxon>
        <taxon>Gunneridae</taxon>
        <taxon>Pentapetalae</taxon>
        <taxon>rosids</taxon>
        <taxon>malvids</taxon>
        <taxon>Brassicales</taxon>
        <taxon>Brassicaceae</taxon>
        <taxon>Camelineae</taxon>
        <taxon>Arabidopsis</taxon>
    </lineage>
</organism>
<evidence type="ECO:0000250" key="1"/>
<evidence type="ECO:0000255" key="2"/>
<evidence type="ECO:0000269" key="3">
    <source>
    </source>
</evidence>
<evidence type="ECO:0000269" key="4">
    <source>
    </source>
</evidence>
<evidence type="ECO:0000269" key="5">
    <source>
    </source>
</evidence>
<evidence type="ECO:0000269" key="6">
    <source>
    </source>
</evidence>
<evidence type="ECO:0000303" key="7">
    <source>
    </source>
</evidence>
<evidence type="ECO:0000303" key="8">
    <source>
    </source>
</evidence>
<evidence type="ECO:0000303" key="9">
    <source>
    </source>
</evidence>
<evidence type="ECO:0000305" key="10"/>
<evidence type="ECO:0000312" key="11">
    <source>
        <dbReference type="Araport" id="AT5G26780"/>
    </source>
</evidence>
<evidence type="ECO:0007744" key="12">
    <source>
        <dbReference type="PDB" id="6SMN"/>
    </source>
</evidence>
<evidence type="ECO:0007744" key="13">
    <source>
        <dbReference type="PDB" id="6SMW"/>
    </source>
</evidence>
<evidence type="ECO:0007829" key="14">
    <source>
        <dbReference type="PDB" id="6SMW"/>
    </source>
</evidence>
<sequence>MALALRRLSSSVKKPISLLSSNGGSLRFMSSLSTAAMAESEKSRSSWIKQLNASLDEIDPEVADIIELEKARQWKGFELIPSENFTSLSVMQAVGSVMTNKYSEGYPGARYYGGNEYIDMAETLCQKRALEAFQLDPSKWGVNVQSLSGSPANFQVYTALLKPHERIMALDLPHGGHLSHGYQTDTKKISAVSIFFETMPYRLDENTGYIDYDQLEKSAVLFRPKLIVAGASAYARLYDYARIRKVCNKQKAVMLADMAHISGLVAAGVIPSPFEYADVVTTTTHKSLRGPRGAMIFFRKGLKEINKQGKEVMYDYEDRINQAVFPGLQGGPHNHTITGLAVALKQARTPEYKAYQDQVLRNCSKFAETLLAKGYDLVSGGTDNHLVLVNLKNKGIDGSRVEKVLELVHIAANKNTVPGDVSAMVPGGIRMGTPALTSRGFIEEDFAKVAEYFDLAVKIALKIKAESQGTKLKDFVATMQSNEKLQSEMSKLREMVEEYAKQFPTIGFEKETMRYKE</sequence>
<comment type="function">
    <text evidence="4 5 6">Functions outside the photorespiratory pathway in catalyzing the interconversion of serine and glycine with the conversion of tetrahydrofolate (THF) into 5,10-methylene-THF.</text>
</comment>
<comment type="catalytic activity">
    <reaction evidence="6">
        <text>(6R)-5,10-methylene-5,6,7,8-tetrahydrofolate + glycine + H2O = (6S)-5,6,7,8-tetrahydrofolate + L-serine</text>
        <dbReference type="Rhea" id="RHEA:15481"/>
        <dbReference type="ChEBI" id="CHEBI:15377"/>
        <dbReference type="ChEBI" id="CHEBI:15636"/>
        <dbReference type="ChEBI" id="CHEBI:33384"/>
        <dbReference type="ChEBI" id="CHEBI:57305"/>
        <dbReference type="ChEBI" id="CHEBI:57453"/>
        <dbReference type="EC" id="2.1.2.1"/>
    </reaction>
</comment>
<comment type="cofactor">
    <cofactor evidence="6">
        <name>pyridoxal 5'-phosphate</name>
        <dbReference type="ChEBI" id="CHEBI:597326"/>
    </cofactor>
</comment>
<comment type="activity regulation">
    <text evidence="6">Inhibited by the antifolate drugs methotrexate and pemetrexed.</text>
</comment>
<comment type="biophysicochemical properties">
    <kinetics>
        <KM evidence="6">11.65 mM for L-serine (at pH 6.5 and 30 degrees Celsius)</KM>
        <KM evidence="6">8.05 mM for L-serine (at pH 7.0 and 30 degrees Celsius)</KM>
        <KM evidence="6">2.86 mM for L-serine (at pH 8.0 and 30 degrees Celsius)</KM>
        <KM evidence="6">1.78 mM for L-serine (at pH 8.5 and 30 degrees Celsius)</KM>
        <KM evidence="6">0.71 mM for L-serine (at pH 9.5 and 30 degrees Celsius)</KM>
        <KM evidence="6">83.6 uM for (6S)-5,6,7,8-tetrahydrofolate (at pH 6.5 and 30 degrees Celsius)</KM>
        <KM evidence="6">153.6 uM for (6S)-5,6,7,8-tetrahydrofolate (at pH 7.0 and 30 degrees Celsius)</KM>
        <KM evidence="6">143.9 uM for (6S)-5,6,7,8-tetrahydrofolate (at pH 8.0 and 30 degrees Celsius)</KM>
        <KM evidence="6">196.1 uM for (6S)-5,6,7,8-tetrahydrofolate (at pH 8.5 and 30 degrees Celsius)</KM>
        <KM evidence="6">192.4 uM for (6S)-5,6,7,8-tetrahydrofolate (at pH 9.5 and 30 degrees Celsius)</KM>
    </kinetics>
</comment>
<comment type="pathway">
    <text evidence="10">One-carbon metabolism; tetrahydrofolate interconversion.</text>
</comment>
<comment type="subunit">
    <text evidence="6">Homotetramer.</text>
</comment>
<comment type="subcellular location">
    <subcellularLocation>
        <location evidence="3">Mitochondrion</location>
    </subcellularLocation>
</comment>
<comment type="alternative products">
    <event type="alternative splicing"/>
    <isoform>
        <id>Q94C74-1</id>
        <name>1</name>
        <sequence type="displayed"/>
    </isoform>
    <isoform>
        <id>Q94C74-2</id>
        <name>2</name>
        <sequence type="described" ref="VSP_046514"/>
    </isoform>
</comment>
<comment type="tissue specificity">
    <text evidence="4 5">Ubiquitous. Mainly expressed in the shoot apical meristem and roots. Also detected in the leaf vasculature, especially in the protoxylem and adjacent cell layers.</text>
</comment>
<comment type="disruption phenotype">
    <text evidence="4">Does not display a lethal photorespiratory phenotype when grown at ambient carbon dioxide.</text>
</comment>
<comment type="miscellaneous">
    <molecule>Isoform 2</molecule>
    <text evidence="10">May be due to a competing acceptor splice site.</text>
</comment>
<comment type="similarity">
    <text evidence="10">Belongs to the SHMT family.</text>
</comment>
<keyword id="KW-0002">3D-structure</keyword>
<keyword id="KW-0025">Alternative splicing</keyword>
<keyword id="KW-0496">Mitochondrion</keyword>
<keyword id="KW-0554">One-carbon metabolism</keyword>
<keyword id="KW-0663">Pyridoxal phosphate</keyword>
<keyword id="KW-1185">Reference proteome</keyword>
<keyword id="KW-0808">Transferase</keyword>
<keyword id="KW-0809">Transit peptide</keyword>
<name>GLYM2_ARATH</name>
<feature type="transit peptide" description="Mitochondrion" evidence="2">
    <location>
        <begin position="1"/>
        <end position="29"/>
    </location>
</feature>
<feature type="chain" id="PRO_0000422347" description="Serine hydroxymethyltransferase 2, mitochondrial">
    <location>
        <begin position="30"/>
        <end position="517"/>
    </location>
</feature>
<feature type="binding site" evidence="6 12 13">
    <location>
        <position position="82"/>
    </location>
    <ligand>
        <name>L-serine</name>
        <dbReference type="ChEBI" id="CHEBI:33384"/>
    </ligand>
</feature>
<feature type="binding site" evidence="6 12 13">
    <location>
        <position position="82"/>
    </location>
    <ligand>
        <name>pemetrexed</name>
        <dbReference type="ChEBI" id="CHEBI:63724"/>
    </ligand>
</feature>
<feature type="binding site" evidence="6 12 13">
    <location>
        <position position="102"/>
    </location>
    <ligand>
        <name>pemetrexed</name>
        <dbReference type="ChEBI" id="CHEBI:63724"/>
    </ligand>
</feature>
<feature type="binding site" evidence="6 12 13">
    <location>
        <position position="104"/>
    </location>
    <ligand>
        <name>L-serine</name>
        <dbReference type="ChEBI" id="CHEBI:33384"/>
    </ligand>
</feature>
<feature type="binding site" evidence="6 12">
    <location>
        <position position="104"/>
    </location>
    <ligand>
        <name>methotrexate</name>
        <dbReference type="ChEBI" id="CHEBI:50681"/>
    </ligand>
</feature>
<feature type="binding site" evidence="6 12 13">
    <location>
        <position position="104"/>
    </location>
    <ligand>
        <name>pemetrexed</name>
        <dbReference type="ChEBI" id="CHEBI:63724"/>
    </ligand>
</feature>
<feature type="binding site" evidence="6 12 13">
    <location>
        <position position="112"/>
    </location>
    <ligand>
        <name>L-serine</name>
        <dbReference type="ChEBI" id="CHEBI:33384"/>
    </ligand>
</feature>
<feature type="binding site" evidence="6 12 13">
    <location>
        <position position="112"/>
    </location>
    <ligand>
        <name>pemetrexed</name>
        <dbReference type="ChEBI" id="CHEBI:63724"/>
    </ligand>
</feature>
<feature type="binding site" evidence="6 12 13">
    <location>
        <begin position="148"/>
        <end position="150"/>
    </location>
    <ligand>
        <name>pemetrexed</name>
        <dbReference type="ChEBI" id="CHEBI:63724"/>
    </ligand>
</feature>
<feature type="binding site" evidence="6 12">
    <location>
        <position position="177"/>
    </location>
    <ligand>
        <name>pemetrexed</name>
        <dbReference type="ChEBI" id="CHEBI:63724"/>
    </ligand>
</feature>
<feature type="binding site" evidence="6 12">
    <location>
        <begin position="184"/>
        <end position="186"/>
    </location>
    <ligand>
        <name>methotrexate</name>
        <dbReference type="ChEBI" id="CHEBI:50681"/>
    </ligand>
</feature>
<feature type="binding site" evidence="6 12 13">
    <location>
        <position position="232"/>
    </location>
    <ligand>
        <name>pemetrexed</name>
        <dbReference type="ChEBI" id="CHEBI:63724"/>
    </ligand>
</feature>
<feature type="binding site" evidence="6 12 13">
    <location>
        <position position="260"/>
    </location>
    <ligand>
        <name>L-serine</name>
        <dbReference type="ChEBI" id="CHEBI:33384"/>
    </ligand>
</feature>
<feature type="binding site" evidence="6 12 13">
    <location>
        <position position="260"/>
    </location>
    <ligand>
        <name>pemetrexed</name>
        <dbReference type="ChEBI" id="CHEBI:63724"/>
    </ligand>
</feature>
<feature type="binding site" evidence="6 13">
    <location>
        <position position="286"/>
    </location>
    <ligand>
        <name>L-serine</name>
        <dbReference type="ChEBI" id="CHEBI:33384"/>
    </ligand>
</feature>
<feature type="binding site" evidence="6 12 13">
    <location>
        <position position="331"/>
    </location>
    <ligand>
        <name>pemetrexed</name>
        <dbReference type="ChEBI" id="CHEBI:63724"/>
    </ligand>
</feature>
<feature type="binding site" evidence="6 12 13">
    <location>
        <position position="414"/>
    </location>
    <ligand>
        <name>methotrexate</name>
        <dbReference type="ChEBI" id="CHEBI:50681"/>
    </ligand>
</feature>
<feature type="binding site" evidence="6 12 13">
    <location>
        <position position="430"/>
    </location>
    <ligand>
        <name>L-serine</name>
        <dbReference type="ChEBI" id="CHEBI:33384"/>
    </ligand>
</feature>
<feature type="binding site" evidence="6 12 13">
    <location>
        <position position="430"/>
    </location>
    <ligand>
        <name>pemetrexed</name>
        <dbReference type="ChEBI" id="CHEBI:63724"/>
    </ligand>
</feature>
<feature type="modified residue" description="N6-(pyridoxal phosphate)lysine" evidence="1">
    <location>
        <position position="286"/>
    </location>
</feature>
<feature type="splice variant" id="VSP_046514" description="In isoform 2." evidence="8">
    <original>E</original>
    <variation>ELDIRPTVIISYGLSMQ</variation>
    <location>
        <position position="368"/>
    </location>
</feature>
<feature type="sequence conflict" description="In Ref. 3; AAK59622." evidence="10" ref="3">
    <original>R</original>
    <variation>H</variation>
    <location>
        <position position="430"/>
    </location>
</feature>
<feature type="helix" evidence="14">
    <location>
        <begin position="44"/>
        <end position="52"/>
    </location>
</feature>
<feature type="helix" evidence="14">
    <location>
        <begin position="55"/>
        <end position="58"/>
    </location>
</feature>
<feature type="helix" evidence="14">
    <location>
        <begin position="60"/>
        <end position="75"/>
    </location>
</feature>
<feature type="strand" evidence="14">
    <location>
        <begin position="76"/>
        <end position="78"/>
    </location>
</feature>
<feature type="helix" evidence="14">
    <location>
        <begin position="88"/>
        <end position="94"/>
    </location>
</feature>
<feature type="helix" evidence="14">
    <location>
        <begin position="97"/>
        <end position="100"/>
    </location>
</feature>
<feature type="strand" evidence="14">
    <location>
        <begin position="109"/>
        <end position="113"/>
    </location>
</feature>
<feature type="helix" evidence="14">
    <location>
        <begin position="116"/>
        <end position="132"/>
    </location>
</feature>
<feature type="turn" evidence="14">
    <location>
        <begin position="137"/>
        <end position="139"/>
    </location>
</feature>
<feature type="strand" evidence="14">
    <location>
        <begin position="140"/>
        <end position="143"/>
    </location>
</feature>
<feature type="helix" evidence="14">
    <location>
        <begin position="149"/>
        <end position="160"/>
    </location>
</feature>
<feature type="strand" evidence="14">
    <location>
        <begin position="166"/>
        <end position="170"/>
    </location>
</feature>
<feature type="helix" evidence="14">
    <location>
        <begin position="172"/>
        <end position="174"/>
    </location>
</feature>
<feature type="helix" evidence="14">
    <location>
        <begin position="178"/>
        <end position="180"/>
    </location>
</feature>
<feature type="helix" evidence="14">
    <location>
        <begin position="192"/>
        <end position="195"/>
    </location>
</feature>
<feature type="strand" evidence="14">
    <location>
        <begin position="196"/>
        <end position="201"/>
    </location>
</feature>
<feature type="turn" evidence="14">
    <location>
        <begin position="205"/>
        <end position="207"/>
    </location>
</feature>
<feature type="strand" evidence="14">
    <location>
        <begin position="208"/>
        <end position="210"/>
    </location>
</feature>
<feature type="helix" evidence="14">
    <location>
        <begin position="212"/>
        <end position="222"/>
    </location>
</feature>
<feature type="strand" evidence="14">
    <location>
        <begin position="225"/>
        <end position="229"/>
    </location>
</feature>
<feature type="helix" evidence="14">
    <location>
        <begin position="240"/>
        <end position="250"/>
    </location>
</feature>
<feature type="strand" evidence="14">
    <location>
        <begin position="253"/>
        <end position="257"/>
    </location>
</feature>
<feature type="helix" evidence="14">
    <location>
        <begin position="259"/>
        <end position="261"/>
    </location>
</feature>
<feature type="helix" evidence="14">
    <location>
        <begin position="262"/>
        <end position="266"/>
    </location>
</feature>
<feature type="helix" evidence="14">
    <location>
        <begin position="273"/>
        <end position="275"/>
    </location>
</feature>
<feature type="strand" evidence="14">
    <location>
        <begin position="278"/>
        <end position="286"/>
    </location>
</feature>
<feature type="strand" evidence="14">
    <location>
        <begin position="294"/>
        <end position="299"/>
    </location>
</feature>
<feature type="strand" evidence="14">
    <location>
        <begin position="301"/>
        <end position="305"/>
    </location>
</feature>
<feature type="strand" evidence="14">
    <location>
        <begin position="311"/>
        <end position="313"/>
    </location>
</feature>
<feature type="helix" evidence="14">
    <location>
        <begin position="317"/>
        <end position="324"/>
    </location>
</feature>
<feature type="turn" evidence="14">
    <location>
        <begin position="325"/>
        <end position="328"/>
    </location>
</feature>
<feature type="helix" evidence="14">
    <location>
        <begin position="334"/>
        <end position="346"/>
    </location>
</feature>
<feature type="helix" evidence="14">
    <location>
        <begin position="350"/>
        <end position="372"/>
    </location>
</feature>
<feature type="helix" evidence="14">
    <location>
        <begin position="378"/>
        <end position="380"/>
    </location>
</feature>
<feature type="strand" evidence="14">
    <location>
        <begin position="383"/>
        <end position="390"/>
    </location>
</feature>
<feature type="helix" evidence="14">
    <location>
        <begin position="391"/>
        <end position="394"/>
    </location>
</feature>
<feature type="helix" evidence="14">
    <location>
        <begin position="398"/>
        <end position="407"/>
    </location>
</feature>
<feature type="strand" evidence="14">
    <location>
        <begin position="413"/>
        <end position="415"/>
    </location>
</feature>
<feature type="strand" evidence="14">
    <location>
        <begin position="428"/>
        <end position="433"/>
    </location>
</feature>
<feature type="helix" evidence="14">
    <location>
        <begin position="434"/>
        <end position="438"/>
    </location>
</feature>
<feature type="helix" evidence="14">
    <location>
        <begin position="443"/>
        <end position="466"/>
    </location>
</feature>
<feature type="strand" evidence="14">
    <location>
        <begin position="468"/>
        <end position="471"/>
    </location>
</feature>
<feature type="helix" evidence="14">
    <location>
        <begin position="472"/>
        <end position="481"/>
    </location>
</feature>
<feature type="helix" evidence="14">
    <location>
        <begin position="483"/>
        <end position="501"/>
    </location>
</feature>
<feature type="strand" evidence="14">
    <location>
        <begin position="506"/>
        <end position="508"/>
    </location>
</feature>
<feature type="helix" evidence="14">
    <location>
        <begin position="510"/>
        <end position="512"/>
    </location>
</feature>
<accession>Q94C74</accession>
<accession>C0Z258</accession>
<accession>Q8GRI1</accession>
<protein>
    <recommendedName>
        <fullName evidence="7">Serine hydroxymethyltransferase 2, mitochondrial</fullName>
        <shortName evidence="9">AtSHMT2</shortName>
        <ecNumber evidence="6">2.1.2.1</ecNumber>
    </recommendedName>
    <alternativeName>
        <fullName evidence="10">Glycine hydroxymethyltransferase 2</fullName>
    </alternativeName>
    <alternativeName>
        <fullName evidence="10">Serine methylase 2</fullName>
    </alternativeName>
</protein>
<dbReference type="EC" id="2.1.2.1" evidence="6"/>
<dbReference type="EMBL" id="AF007270">
    <property type="status" value="NOT_ANNOTATED_CDS"/>
    <property type="molecule type" value="Genomic_DNA"/>
</dbReference>
<dbReference type="EMBL" id="CP002688">
    <property type="protein sequence ID" value="AED93602.1"/>
    <property type="molecule type" value="Genomic_DNA"/>
</dbReference>
<dbReference type="EMBL" id="CP002688">
    <property type="protein sequence ID" value="AED93603.1"/>
    <property type="molecule type" value="Genomic_DNA"/>
</dbReference>
<dbReference type="EMBL" id="CP002688">
    <property type="protein sequence ID" value="AED93604.1"/>
    <property type="molecule type" value="Genomic_DNA"/>
</dbReference>
<dbReference type="EMBL" id="CP002688">
    <property type="protein sequence ID" value="ANM69726.1"/>
    <property type="molecule type" value="Genomic_DNA"/>
</dbReference>
<dbReference type="EMBL" id="AY035117">
    <property type="protein sequence ID" value="AAK59622.1"/>
    <property type="molecule type" value="mRNA"/>
</dbReference>
<dbReference type="EMBL" id="BT001097">
    <property type="protein sequence ID" value="AAN61005.1"/>
    <property type="molecule type" value="mRNA"/>
</dbReference>
<dbReference type="EMBL" id="BT001113">
    <property type="protein sequence ID" value="AAN64177.1"/>
    <property type="molecule type" value="mRNA"/>
</dbReference>
<dbReference type="EMBL" id="AK318672">
    <property type="protein sequence ID" value="BAH56787.1"/>
    <property type="molecule type" value="mRNA"/>
</dbReference>
<dbReference type="RefSeq" id="NP_001331385.1">
    <molecule id="Q94C74-1"/>
    <property type="nucleotide sequence ID" value="NM_001343982.1"/>
</dbReference>
<dbReference type="RefSeq" id="NP_568488.2">
    <molecule id="Q94C74-2"/>
    <property type="nucleotide sequence ID" value="NM_122560.2"/>
</dbReference>
<dbReference type="RefSeq" id="NP_851080.1">
    <molecule id="Q94C74-1"/>
    <property type="nucleotide sequence ID" value="NM_180749.4"/>
</dbReference>
<dbReference type="RefSeq" id="NP_851081.1">
    <molecule id="Q94C74-2"/>
    <property type="nucleotide sequence ID" value="NM_180750.2"/>
</dbReference>
<dbReference type="PDB" id="6SMN">
    <property type="method" value="X-ray"/>
    <property type="resolution" value="1.63 A"/>
    <property type="chains" value="A/B/C/D=41-517"/>
</dbReference>
<dbReference type="PDB" id="6SMW">
    <property type="method" value="X-ray"/>
    <property type="resolution" value="1.54 A"/>
    <property type="chains" value="A/B/C/D=41-517"/>
</dbReference>
<dbReference type="PDB" id="7PZZ">
    <property type="method" value="X-ray"/>
    <property type="resolution" value="1.65 A"/>
    <property type="chains" value="A/B/C/D=41-517"/>
</dbReference>
<dbReference type="PDBsum" id="6SMN"/>
<dbReference type="PDBsum" id="6SMW"/>
<dbReference type="PDBsum" id="7PZZ"/>
<dbReference type="SMR" id="Q94C74"/>
<dbReference type="BioGRID" id="18011">
    <property type="interactions" value="8"/>
</dbReference>
<dbReference type="FunCoup" id="Q94C74">
    <property type="interactions" value="3305"/>
</dbReference>
<dbReference type="IntAct" id="Q94C74">
    <property type="interactions" value="1"/>
</dbReference>
<dbReference type="STRING" id="3702.Q94C74"/>
<dbReference type="PaxDb" id="3702-AT5G26780.3"/>
<dbReference type="ProteomicsDB" id="248433">
    <molecule id="Q94C74-1"/>
</dbReference>
<dbReference type="EnsemblPlants" id="AT5G26780.1">
    <molecule id="Q94C74-1"/>
    <property type="protein sequence ID" value="AT5G26780.1"/>
    <property type="gene ID" value="AT5G26780"/>
</dbReference>
<dbReference type="EnsemblPlants" id="AT5G26780.2">
    <molecule id="Q94C74-2"/>
    <property type="protein sequence ID" value="AT5G26780.2"/>
    <property type="gene ID" value="AT5G26780"/>
</dbReference>
<dbReference type="EnsemblPlants" id="AT5G26780.3">
    <molecule id="Q94C74-2"/>
    <property type="protein sequence ID" value="AT5G26780.3"/>
    <property type="gene ID" value="AT5G26780"/>
</dbReference>
<dbReference type="EnsemblPlants" id="AT5G26780.4">
    <molecule id="Q94C74-1"/>
    <property type="protein sequence ID" value="AT5G26780.4"/>
    <property type="gene ID" value="AT5G26780"/>
</dbReference>
<dbReference type="GeneID" id="832736"/>
<dbReference type="Gramene" id="AT5G26780.1">
    <molecule id="Q94C74-1"/>
    <property type="protein sequence ID" value="AT5G26780.1"/>
    <property type="gene ID" value="AT5G26780"/>
</dbReference>
<dbReference type="Gramene" id="AT5G26780.2">
    <molecule id="Q94C74-2"/>
    <property type="protein sequence ID" value="AT5G26780.2"/>
    <property type="gene ID" value="AT5G26780"/>
</dbReference>
<dbReference type="Gramene" id="AT5G26780.3">
    <molecule id="Q94C74-2"/>
    <property type="protein sequence ID" value="AT5G26780.3"/>
    <property type="gene ID" value="AT5G26780"/>
</dbReference>
<dbReference type="Gramene" id="AT5G26780.4">
    <molecule id="Q94C74-1"/>
    <property type="protein sequence ID" value="AT5G26780.4"/>
    <property type="gene ID" value="AT5G26780"/>
</dbReference>
<dbReference type="KEGG" id="ath:AT5G26780"/>
<dbReference type="Araport" id="AT5G26780"/>
<dbReference type="TAIR" id="AT5G26780">
    <property type="gene designation" value="SHM2"/>
</dbReference>
<dbReference type="eggNOG" id="KOG2467">
    <property type="taxonomic scope" value="Eukaryota"/>
</dbReference>
<dbReference type="HOGENOM" id="CLU_022477_0_1_1"/>
<dbReference type="InParanoid" id="Q94C74"/>
<dbReference type="OMA" id="ANASVMH"/>
<dbReference type="PhylomeDB" id="Q94C74"/>
<dbReference type="SABIO-RK" id="Q94C74"/>
<dbReference type="UniPathway" id="UPA00193"/>
<dbReference type="CD-CODE" id="4299E36E">
    <property type="entry name" value="Nucleolus"/>
</dbReference>
<dbReference type="PRO" id="PR:Q94C74"/>
<dbReference type="Proteomes" id="UP000006548">
    <property type="component" value="Chromosome 5"/>
</dbReference>
<dbReference type="ExpressionAtlas" id="Q94C74">
    <property type="expression patterns" value="baseline and differential"/>
</dbReference>
<dbReference type="GO" id="GO:0005739">
    <property type="term" value="C:mitochondrion"/>
    <property type="evidence" value="ECO:0007005"/>
    <property type="project" value="TAIR"/>
</dbReference>
<dbReference type="GO" id="GO:0009536">
    <property type="term" value="C:plastid"/>
    <property type="evidence" value="ECO:0007005"/>
    <property type="project" value="TAIR"/>
</dbReference>
<dbReference type="GO" id="GO:0050897">
    <property type="term" value="F:cobalt ion binding"/>
    <property type="evidence" value="ECO:0007005"/>
    <property type="project" value="TAIR"/>
</dbReference>
<dbReference type="GO" id="GO:0004372">
    <property type="term" value="F:glycine hydroxymethyltransferase activity"/>
    <property type="evidence" value="ECO:0000314"/>
    <property type="project" value="UniProtKB"/>
</dbReference>
<dbReference type="GO" id="GO:0030170">
    <property type="term" value="F:pyridoxal phosphate binding"/>
    <property type="evidence" value="ECO:0007669"/>
    <property type="project" value="InterPro"/>
</dbReference>
<dbReference type="GO" id="GO:0008270">
    <property type="term" value="F:zinc ion binding"/>
    <property type="evidence" value="ECO:0007005"/>
    <property type="project" value="TAIR"/>
</dbReference>
<dbReference type="GO" id="GO:0019264">
    <property type="term" value="P:glycine biosynthetic process from serine"/>
    <property type="evidence" value="ECO:0007669"/>
    <property type="project" value="InterPro"/>
</dbReference>
<dbReference type="GO" id="GO:0006544">
    <property type="term" value="P:glycine metabolic process"/>
    <property type="evidence" value="ECO:0000314"/>
    <property type="project" value="UniProtKB"/>
</dbReference>
<dbReference type="GO" id="GO:0006563">
    <property type="term" value="P:L-serine metabolic process"/>
    <property type="evidence" value="ECO:0000314"/>
    <property type="project" value="UniProtKB"/>
</dbReference>
<dbReference type="GO" id="GO:0035999">
    <property type="term" value="P:tetrahydrofolate interconversion"/>
    <property type="evidence" value="ECO:0007669"/>
    <property type="project" value="UniProtKB-UniPathway"/>
</dbReference>
<dbReference type="CDD" id="cd00378">
    <property type="entry name" value="SHMT"/>
    <property type="match status" value="1"/>
</dbReference>
<dbReference type="FunFam" id="3.40.640.10:FF:000050">
    <property type="entry name" value="Serine hydroxymethyltransferase"/>
    <property type="match status" value="1"/>
</dbReference>
<dbReference type="Gene3D" id="3.90.1150.10">
    <property type="entry name" value="Aspartate Aminotransferase, domain 1"/>
    <property type="match status" value="1"/>
</dbReference>
<dbReference type="Gene3D" id="3.40.640.10">
    <property type="entry name" value="Type I PLP-dependent aspartate aminotransferase-like (Major domain)"/>
    <property type="match status" value="1"/>
</dbReference>
<dbReference type="HAMAP" id="MF_00051">
    <property type="entry name" value="SHMT"/>
    <property type="match status" value="1"/>
</dbReference>
<dbReference type="InterPro" id="IPR015424">
    <property type="entry name" value="PyrdxlP-dep_Trfase"/>
</dbReference>
<dbReference type="InterPro" id="IPR015421">
    <property type="entry name" value="PyrdxlP-dep_Trfase_major"/>
</dbReference>
<dbReference type="InterPro" id="IPR015422">
    <property type="entry name" value="PyrdxlP-dep_Trfase_small"/>
</dbReference>
<dbReference type="InterPro" id="IPR001085">
    <property type="entry name" value="Ser_HO-MeTrfase"/>
</dbReference>
<dbReference type="InterPro" id="IPR049943">
    <property type="entry name" value="Ser_HO-MeTrfase-like"/>
</dbReference>
<dbReference type="InterPro" id="IPR019798">
    <property type="entry name" value="Ser_HO-MeTrfase_PLP_BS"/>
</dbReference>
<dbReference type="InterPro" id="IPR039429">
    <property type="entry name" value="SHMT-like_dom"/>
</dbReference>
<dbReference type="NCBIfam" id="NF000586">
    <property type="entry name" value="PRK00011.1"/>
    <property type="match status" value="1"/>
</dbReference>
<dbReference type="PANTHER" id="PTHR11680">
    <property type="entry name" value="SERINE HYDROXYMETHYLTRANSFERASE"/>
    <property type="match status" value="1"/>
</dbReference>
<dbReference type="PANTHER" id="PTHR11680:SF28">
    <property type="entry name" value="SERINE HYDROXYMETHYLTRANSFERASE, MITOCHONDRIAL"/>
    <property type="match status" value="1"/>
</dbReference>
<dbReference type="Pfam" id="PF00464">
    <property type="entry name" value="SHMT"/>
    <property type="match status" value="1"/>
</dbReference>
<dbReference type="PIRSF" id="PIRSF000412">
    <property type="entry name" value="SHMT"/>
    <property type="match status" value="1"/>
</dbReference>
<dbReference type="SUPFAM" id="SSF53383">
    <property type="entry name" value="PLP-dependent transferases"/>
    <property type="match status" value="1"/>
</dbReference>
<dbReference type="PROSITE" id="PS00096">
    <property type="entry name" value="SHMT"/>
    <property type="match status" value="1"/>
</dbReference>